<name>RS12_ACAM1</name>
<reference key="1">
    <citation type="journal article" date="2008" name="Proc. Natl. Acad. Sci. U.S.A.">
        <title>Niche adaptation and genome expansion in the chlorophyll d-producing cyanobacterium Acaryochloris marina.</title>
        <authorList>
            <person name="Swingley W.D."/>
            <person name="Chen M."/>
            <person name="Cheung P.C."/>
            <person name="Conrad A.L."/>
            <person name="Dejesa L.C."/>
            <person name="Hao J."/>
            <person name="Honchak B.M."/>
            <person name="Karbach L.E."/>
            <person name="Kurdoglu A."/>
            <person name="Lahiri S."/>
            <person name="Mastrian S.D."/>
            <person name="Miyashita H."/>
            <person name="Page L."/>
            <person name="Ramakrishna P."/>
            <person name="Satoh S."/>
            <person name="Sattley W.M."/>
            <person name="Shimada Y."/>
            <person name="Taylor H.L."/>
            <person name="Tomo T."/>
            <person name="Tsuchiya T."/>
            <person name="Wang Z.T."/>
            <person name="Raymond J."/>
            <person name="Mimuro M."/>
            <person name="Blankenship R.E."/>
            <person name="Touchman J.W."/>
        </authorList>
    </citation>
    <scope>NUCLEOTIDE SEQUENCE [LARGE SCALE GENOMIC DNA]</scope>
    <source>
        <strain>MBIC 11017</strain>
    </source>
</reference>
<dbReference type="EMBL" id="CP000828">
    <property type="protein sequence ID" value="ABW26818.1"/>
    <property type="molecule type" value="Genomic_DNA"/>
</dbReference>
<dbReference type="RefSeq" id="WP_012162327.1">
    <property type="nucleotide sequence ID" value="NC_009925.1"/>
</dbReference>
<dbReference type="SMR" id="B0CCD3"/>
<dbReference type="STRING" id="329726.AM1_1797"/>
<dbReference type="KEGG" id="amr:AM1_1797"/>
<dbReference type="eggNOG" id="COG0048">
    <property type="taxonomic scope" value="Bacteria"/>
</dbReference>
<dbReference type="HOGENOM" id="CLU_104295_1_2_3"/>
<dbReference type="OrthoDB" id="9802366at2"/>
<dbReference type="Proteomes" id="UP000000268">
    <property type="component" value="Chromosome"/>
</dbReference>
<dbReference type="GO" id="GO:0015935">
    <property type="term" value="C:small ribosomal subunit"/>
    <property type="evidence" value="ECO:0007669"/>
    <property type="project" value="InterPro"/>
</dbReference>
<dbReference type="GO" id="GO:0019843">
    <property type="term" value="F:rRNA binding"/>
    <property type="evidence" value="ECO:0007669"/>
    <property type="project" value="UniProtKB-UniRule"/>
</dbReference>
<dbReference type="GO" id="GO:0003735">
    <property type="term" value="F:structural constituent of ribosome"/>
    <property type="evidence" value="ECO:0007669"/>
    <property type="project" value="InterPro"/>
</dbReference>
<dbReference type="GO" id="GO:0000049">
    <property type="term" value="F:tRNA binding"/>
    <property type="evidence" value="ECO:0007669"/>
    <property type="project" value="UniProtKB-UniRule"/>
</dbReference>
<dbReference type="GO" id="GO:0006412">
    <property type="term" value="P:translation"/>
    <property type="evidence" value="ECO:0007669"/>
    <property type="project" value="UniProtKB-UniRule"/>
</dbReference>
<dbReference type="CDD" id="cd03368">
    <property type="entry name" value="Ribosomal_S12"/>
    <property type="match status" value="1"/>
</dbReference>
<dbReference type="FunFam" id="2.40.50.140:FF:000001">
    <property type="entry name" value="30S ribosomal protein S12"/>
    <property type="match status" value="1"/>
</dbReference>
<dbReference type="Gene3D" id="2.40.50.140">
    <property type="entry name" value="Nucleic acid-binding proteins"/>
    <property type="match status" value="1"/>
</dbReference>
<dbReference type="HAMAP" id="MF_00403_B">
    <property type="entry name" value="Ribosomal_uS12_B"/>
    <property type="match status" value="1"/>
</dbReference>
<dbReference type="InterPro" id="IPR012340">
    <property type="entry name" value="NA-bd_OB-fold"/>
</dbReference>
<dbReference type="InterPro" id="IPR006032">
    <property type="entry name" value="Ribosomal_uS12"/>
</dbReference>
<dbReference type="InterPro" id="IPR005679">
    <property type="entry name" value="Ribosomal_uS12_bac"/>
</dbReference>
<dbReference type="NCBIfam" id="TIGR00981">
    <property type="entry name" value="rpsL_bact"/>
    <property type="match status" value="1"/>
</dbReference>
<dbReference type="PANTHER" id="PTHR11652">
    <property type="entry name" value="30S RIBOSOMAL PROTEIN S12 FAMILY MEMBER"/>
    <property type="match status" value="1"/>
</dbReference>
<dbReference type="Pfam" id="PF00164">
    <property type="entry name" value="Ribosom_S12_S23"/>
    <property type="match status" value="1"/>
</dbReference>
<dbReference type="PIRSF" id="PIRSF002133">
    <property type="entry name" value="Ribosomal_S12/S23"/>
    <property type="match status" value="1"/>
</dbReference>
<dbReference type="PRINTS" id="PR01034">
    <property type="entry name" value="RIBOSOMALS12"/>
</dbReference>
<dbReference type="SUPFAM" id="SSF50249">
    <property type="entry name" value="Nucleic acid-binding proteins"/>
    <property type="match status" value="1"/>
</dbReference>
<dbReference type="PROSITE" id="PS00055">
    <property type="entry name" value="RIBOSOMAL_S12"/>
    <property type="match status" value="1"/>
</dbReference>
<evidence type="ECO:0000250" key="1"/>
<evidence type="ECO:0000255" key="2">
    <source>
        <dbReference type="HAMAP-Rule" id="MF_00403"/>
    </source>
</evidence>
<evidence type="ECO:0000256" key="3">
    <source>
        <dbReference type="SAM" id="MobiDB-lite"/>
    </source>
</evidence>
<evidence type="ECO:0000305" key="4"/>
<accession>B0CCD3</accession>
<gene>
    <name evidence="2" type="primary">rpsL</name>
    <name evidence="2" type="synonym">rps12</name>
    <name type="ordered locus">AM1_1797</name>
</gene>
<organism>
    <name type="scientific">Acaryochloris marina (strain MBIC 11017)</name>
    <dbReference type="NCBI Taxonomy" id="329726"/>
    <lineage>
        <taxon>Bacteria</taxon>
        <taxon>Bacillati</taxon>
        <taxon>Cyanobacteriota</taxon>
        <taxon>Cyanophyceae</taxon>
        <taxon>Acaryochloridales</taxon>
        <taxon>Acaryochloridaceae</taxon>
        <taxon>Acaryochloris</taxon>
    </lineage>
</organism>
<feature type="chain" id="PRO_1000080379" description="Small ribosomal subunit protein uS12">
    <location>
        <begin position="1"/>
        <end position="124"/>
    </location>
</feature>
<feature type="region of interest" description="Disordered" evidence="3">
    <location>
        <begin position="103"/>
        <end position="124"/>
    </location>
</feature>
<feature type="compositionally biased region" description="Basic residues" evidence="3">
    <location>
        <begin position="113"/>
        <end position="124"/>
    </location>
</feature>
<feature type="modified residue" description="3-methylthioaspartic acid" evidence="1">
    <location>
        <position position="89"/>
    </location>
</feature>
<comment type="function">
    <text evidence="2">With S4 and S5 plays an important role in translational accuracy.</text>
</comment>
<comment type="function">
    <text evidence="2">Interacts with and stabilizes bases of the 16S rRNA that are involved in tRNA selection in the A site and with the mRNA backbone. Located at the interface of the 30S and 50S subunits, it traverses the body of the 30S subunit contacting proteins on the other side and probably holding the rRNA structure together. The combined cluster of proteins S8, S12 and S17 appears to hold together the shoulder and platform of the 30S subunit.</text>
</comment>
<comment type="subunit">
    <text evidence="2">Part of the 30S ribosomal subunit. Contacts proteins S8 and S17. May interact with IF1 in the 30S initiation complex.</text>
</comment>
<comment type="similarity">
    <text evidence="2">Belongs to the universal ribosomal protein uS12 family.</text>
</comment>
<sequence length="124" mass="13985">MPTIQQLIRSERYNTKKKTKSPALKSCPQRRGVCTRVYTTTPKKPNSALRKVARVRLTSGFEVTAYIPGIGHNLQEHSVVMIRGGRVKDLPGVRYHIIRGTLDTAGVKDRRQGRSKYGAKRPKD</sequence>
<protein>
    <recommendedName>
        <fullName evidence="2">Small ribosomal subunit protein uS12</fullName>
    </recommendedName>
    <alternativeName>
        <fullName evidence="4">30S ribosomal protein S12</fullName>
    </alternativeName>
</protein>
<keyword id="KW-0488">Methylation</keyword>
<keyword id="KW-1185">Reference proteome</keyword>
<keyword id="KW-0687">Ribonucleoprotein</keyword>
<keyword id="KW-0689">Ribosomal protein</keyword>
<keyword id="KW-0694">RNA-binding</keyword>
<keyword id="KW-0699">rRNA-binding</keyword>
<keyword id="KW-0820">tRNA-binding</keyword>
<proteinExistence type="inferred from homology"/>